<gene>
    <name evidence="1" type="primary">rpoB</name>
    <name type="ordered locus">CPn_0081</name>
    <name type="ordered locus">CP_0694</name>
    <name type="ordered locus">CpB0081</name>
</gene>
<keyword id="KW-0240">DNA-directed RNA polymerase</keyword>
<keyword id="KW-0548">Nucleotidyltransferase</keyword>
<keyword id="KW-0804">Transcription</keyword>
<keyword id="KW-0808">Transferase</keyword>
<sequence>MLKCPERVSVKKKEDIPDLPNLIEIQIKSYKQFLQIGKLAEERENIGLEEVFREIFPIKSYNEATVLEYLSYNLGVPKYSPEECIRRGITYSVTLKVRFRLTDETGIKEEEVYMGTIPLMTDKGTFIINGAERVVVSQVHRSPGINFEQEKHSKGNILFSFRIIPYRGSWLEAIFDINDLIYIHIDRKKRRRKILAITFIRALGYSSDADIIEEFFTIGESSLRSEKDFALLVGRILADNIIDEASSLVYGKAGEKLSTAMLKRMLDAGIASVKIAVDADENHPIIKMLAKDPTDSYEAALKDFYRRLRPGEPATLANARSTIMRLFFDPKRYNLGRVGRYKLNRKLGFSIDDEALSQVTLRKEDVIGALKYLIRLKMGDEKACVDDIDHLANRRVRSVGELIQNQCRSGLARMEKIVRERMNLFDFSSDTLTPGKVVSAKGLASVLKDFFGRSQLSQFMDQTNPVAELTHKRRLSALGPGGLNRERAGFEVRDVHASHYGRICPIETPEGPNIGLITSLSSFAKINEFGFIETPYRIVRDGIVTDEIEYMTADVEEECVIAQASASLDEYNMFTEPVCWVRYAGEAFEADTSTVTHMDVSPKQLVSIVTGLIPFLEHDDANRALMGSNMQRQAVPLLKTEAPVVGTGLECRAAKDSGAIVVAEEDGVVDFVDGYKVVVAAKHNPTIKRTYHLKKFLRSNSGTCINQQPLCAVGDVITKGDVIADGPATDRGELALGKNVLVAFMPWYGYNFEDAIIISEKLIREDAYTSIYIEEFELTARDTKLGKEEITRDIPNVSDEVLANLGEDGIIRIGAEVKPGDILVGKITPKSETELAPEERLLRAIFGEKAADVKDASLTVPPGTEGVVMDVKVFSRKDRLSKSDDELVEEAVHLKDLQKGYKNQVATLKTEYREKLGALLLNEKAPAAIIHRRTAEIVVHEGLLFDQETIERIEQEDLVDLLMPNCEMYEVLKGLLSDYETALQRLEINYKTEVEHIREGDADLDHGVIRQVKVYVASKRKLQVGDKMAGRHGNKGVVSKIVPEADMPYLSNGETVQMILNPLGVPSRMNLGQVLETHLGYAAKTAGIYVKTPVFEGFPEQRIWDMMIEQGLPEDGKSFLYDGKTGERFDNKVVIGYIYMLKLSHLIADKIHARSIGPYSLVTQQPLGGKAQMGGQRFGEMEVWALEAYGVAHMLQEILTVKSDDVSGRTRIYESIVKGENLLRSGTPESFNVLIKEMQGLGLDVRPMVVDA</sequence>
<comment type="function">
    <text evidence="1">DNA-dependent RNA polymerase catalyzes the transcription of DNA into RNA using the four ribonucleoside triphosphates as substrates.</text>
</comment>
<comment type="catalytic activity">
    <reaction evidence="1">
        <text>RNA(n) + a ribonucleoside 5'-triphosphate = RNA(n+1) + diphosphate</text>
        <dbReference type="Rhea" id="RHEA:21248"/>
        <dbReference type="Rhea" id="RHEA-COMP:14527"/>
        <dbReference type="Rhea" id="RHEA-COMP:17342"/>
        <dbReference type="ChEBI" id="CHEBI:33019"/>
        <dbReference type="ChEBI" id="CHEBI:61557"/>
        <dbReference type="ChEBI" id="CHEBI:140395"/>
        <dbReference type="EC" id="2.7.7.6"/>
    </reaction>
</comment>
<comment type="subunit">
    <text evidence="1">The RNAP catalytic core consists of 2 alpha, 1 beta, 1 beta' and 1 omega subunit. When a sigma factor is associated with the core the holoenzyme is formed, which can initiate transcription.</text>
</comment>
<comment type="similarity">
    <text evidence="1">Belongs to the RNA polymerase beta chain family.</text>
</comment>
<comment type="sequence caution" evidence="2">
    <conflict type="erroneous initiation">
        <sequence resource="EMBL-CDS" id="AAF38502"/>
    </conflict>
</comment>
<reference key="1">
    <citation type="journal article" date="1999" name="Nat. Genet.">
        <title>Comparative genomes of Chlamydia pneumoniae and C. trachomatis.</title>
        <authorList>
            <person name="Kalman S."/>
            <person name="Mitchell W.P."/>
            <person name="Marathe R."/>
            <person name="Lammel C.J."/>
            <person name="Fan J."/>
            <person name="Hyman R.W."/>
            <person name="Olinger L."/>
            <person name="Grimwood J."/>
            <person name="Davis R.W."/>
            <person name="Stephens R.S."/>
        </authorList>
    </citation>
    <scope>NUCLEOTIDE SEQUENCE [LARGE SCALE GENOMIC DNA]</scope>
    <source>
        <strain>CWL029</strain>
    </source>
</reference>
<reference key="2">
    <citation type="journal article" date="2000" name="Nucleic Acids Res.">
        <title>Genome sequences of Chlamydia trachomatis MoPn and Chlamydia pneumoniae AR39.</title>
        <authorList>
            <person name="Read T.D."/>
            <person name="Brunham R.C."/>
            <person name="Shen C."/>
            <person name="Gill S.R."/>
            <person name="Heidelberg J.F."/>
            <person name="White O."/>
            <person name="Hickey E.K."/>
            <person name="Peterson J.D."/>
            <person name="Utterback T.R."/>
            <person name="Berry K.J."/>
            <person name="Bass S."/>
            <person name="Linher K.D."/>
            <person name="Weidman J.F."/>
            <person name="Khouri H.M."/>
            <person name="Craven B."/>
            <person name="Bowman C."/>
            <person name="Dodson R.J."/>
            <person name="Gwinn M.L."/>
            <person name="Nelson W.C."/>
            <person name="DeBoy R.T."/>
            <person name="Kolonay J.F."/>
            <person name="McClarty G."/>
            <person name="Salzberg S.L."/>
            <person name="Eisen J.A."/>
            <person name="Fraser C.M."/>
        </authorList>
    </citation>
    <scope>NUCLEOTIDE SEQUENCE [LARGE SCALE GENOMIC DNA]</scope>
    <source>
        <strain>AR39</strain>
    </source>
</reference>
<reference key="3">
    <citation type="journal article" date="2000" name="Nucleic Acids Res.">
        <title>Comparison of whole genome sequences of Chlamydia pneumoniae J138 from Japan and CWL029 from USA.</title>
        <authorList>
            <person name="Shirai M."/>
            <person name="Hirakawa H."/>
            <person name="Kimoto M."/>
            <person name="Tabuchi M."/>
            <person name="Kishi F."/>
            <person name="Ouchi K."/>
            <person name="Shiba T."/>
            <person name="Ishii K."/>
            <person name="Hattori M."/>
            <person name="Kuhara S."/>
            <person name="Nakazawa T."/>
        </authorList>
    </citation>
    <scope>NUCLEOTIDE SEQUENCE [LARGE SCALE GENOMIC DNA]</scope>
    <source>
        <strain>J138</strain>
    </source>
</reference>
<reference key="4">
    <citation type="submission" date="2002-05" db="EMBL/GenBank/DDBJ databases">
        <title>The genome sequence of Chlamydia pneumoniae TW183 and comparison with other Chlamydia strains based on whole genome sequence analysis.</title>
        <authorList>
            <person name="Geng M.M."/>
            <person name="Schuhmacher A."/>
            <person name="Muehldorfer I."/>
            <person name="Bensch K.W."/>
            <person name="Schaefer K.P."/>
            <person name="Schneider S."/>
            <person name="Pohl T."/>
            <person name="Essig A."/>
            <person name="Marre R."/>
            <person name="Melchers K."/>
        </authorList>
    </citation>
    <scope>NUCLEOTIDE SEQUENCE [LARGE SCALE GENOMIC DNA]</scope>
    <source>
        <strain>TW-183</strain>
    </source>
</reference>
<accession>Q9Z9A0</accession>
<accession>Q9JSJ8</accession>
<accession>Q9K210</accession>
<protein>
    <recommendedName>
        <fullName evidence="1">DNA-directed RNA polymerase subunit beta</fullName>
        <shortName evidence="1">RNAP subunit beta</shortName>
        <ecNumber evidence="1">2.7.7.6</ecNumber>
    </recommendedName>
    <alternativeName>
        <fullName evidence="1">RNA polymerase subunit beta</fullName>
    </alternativeName>
    <alternativeName>
        <fullName evidence="1">Transcriptase subunit beta</fullName>
    </alternativeName>
</protein>
<organism>
    <name type="scientific">Chlamydia pneumoniae</name>
    <name type="common">Chlamydophila pneumoniae</name>
    <dbReference type="NCBI Taxonomy" id="83558"/>
    <lineage>
        <taxon>Bacteria</taxon>
        <taxon>Pseudomonadati</taxon>
        <taxon>Chlamydiota</taxon>
        <taxon>Chlamydiia</taxon>
        <taxon>Chlamydiales</taxon>
        <taxon>Chlamydiaceae</taxon>
        <taxon>Chlamydia/Chlamydophila group</taxon>
        <taxon>Chlamydia</taxon>
    </lineage>
</organism>
<evidence type="ECO:0000255" key="1">
    <source>
        <dbReference type="HAMAP-Rule" id="MF_01321"/>
    </source>
</evidence>
<evidence type="ECO:0000305" key="2"/>
<feature type="chain" id="PRO_0000047880" description="DNA-directed RNA polymerase subunit beta">
    <location>
        <begin position="1"/>
        <end position="1252"/>
    </location>
</feature>
<feature type="sequence conflict" description="In Ref. 3; BAA98291." evidence="2" ref="3">
    <original>S</original>
    <variation>C</variation>
    <location>
        <position position="246"/>
    </location>
</feature>
<feature type="sequence conflict" description="In Ref. 3; BAA98291." evidence="2" ref="3">
    <original>T</original>
    <variation>I</variation>
    <location>
        <position position="259"/>
    </location>
</feature>
<dbReference type="EC" id="2.7.7.6" evidence="1"/>
<dbReference type="EMBL" id="AE001363">
    <property type="protein sequence ID" value="AAD18234.1"/>
    <property type="molecule type" value="Genomic_DNA"/>
</dbReference>
<dbReference type="EMBL" id="AE002161">
    <property type="protein sequence ID" value="AAF38502.1"/>
    <property type="status" value="ALT_INIT"/>
    <property type="molecule type" value="Genomic_DNA"/>
</dbReference>
<dbReference type="EMBL" id="BA000008">
    <property type="protein sequence ID" value="BAA98291.1"/>
    <property type="molecule type" value="Genomic_DNA"/>
</dbReference>
<dbReference type="EMBL" id="AE009440">
    <property type="protein sequence ID" value="AAP98014.1"/>
    <property type="molecule type" value="Genomic_DNA"/>
</dbReference>
<dbReference type="PIR" id="A86501">
    <property type="entry name" value="A86501"/>
</dbReference>
<dbReference type="PIR" id="D72122">
    <property type="entry name" value="D72122"/>
</dbReference>
<dbReference type="PIR" id="F81548">
    <property type="entry name" value="F81548"/>
</dbReference>
<dbReference type="RefSeq" id="NP_224289.1">
    <property type="nucleotide sequence ID" value="NC_000922.1"/>
</dbReference>
<dbReference type="RefSeq" id="WP_010882731.1">
    <property type="nucleotide sequence ID" value="NZ_LN847257.1"/>
</dbReference>
<dbReference type="SMR" id="Q9Z9A0"/>
<dbReference type="STRING" id="406984.CPK_ORF00590"/>
<dbReference type="GeneID" id="45050126"/>
<dbReference type="KEGG" id="cpa:CP_0694"/>
<dbReference type="KEGG" id="cpj:rpoB"/>
<dbReference type="KEGG" id="cpn:CPn_0081"/>
<dbReference type="KEGG" id="cpt:CpB0081"/>
<dbReference type="PATRIC" id="fig|115713.3.peg.93"/>
<dbReference type="eggNOG" id="COG0085">
    <property type="taxonomic scope" value="Bacteria"/>
</dbReference>
<dbReference type="HOGENOM" id="CLU_000524_4_3_0"/>
<dbReference type="OrthoDB" id="9803954at2"/>
<dbReference type="Proteomes" id="UP000000583">
    <property type="component" value="Chromosome"/>
</dbReference>
<dbReference type="Proteomes" id="UP000000801">
    <property type="component" value="Chromosome"/>
</dbReference>
<dbReference type="GO" id="GO:0000428">
    <property type="term" value="C:DNA-directed RNA polymerase complex"/>
    <property type="evidence" value="ECO:0007669"/>
    <property type="project" value="UniProtKB-KW"/>
</dbReference>
<dbReference type="GO" id="GO:0003677">
    <property type="term" value="F:DNA binding"/>
    <property type="evidence" value="ECO:0007669"/>
    <property type="project" value="UniProtKB-UniRule"/>
</dbReference>
<dbReference type="GO" id="GO:0003899">
    <property type="term" value="F:DNA-directed RNA polymerase activity"/>
    <property type="evidence" value="ECO:0007669"/>
    <property type="project" value="UniProtKB-UniRule"/>
</dbReference>
<dbReference type="GO" id="GO:0032549">
    <property type="term" value="F:ribonucleoside binding"/>
    <property type="evidence" value="ECO:0007669"/>
    <property type="project" value="InterPro"/>
</dbReference>
<dbReference type="GO" id="GO:0006351">
    <property type="term" value="P:DNA-templated transcription"/>
    <property type="evidence" value="ECO:0007669"/>
    <property type="project" value="UniProtKB-UniRule"/>
</dbReference>
<dbReference type="CDD" id="cd00653">
    <property type="entry name" value="RNA_pol_B_RPB2"/>
    <property type="match status" value="1"/>
</dbReference>
<dbReference type="FunFam" id="3.90.1800.10:FF:000001">
    <property type="entry name" value="DNA-directed RNA polymerase subunit beta"/>
    <property type="match status" value="1"/>
</dbReference>
<dbReference type="Gene3D" id="2.40.50.100">
    <property type="match status" value="1"/>
</dbReference>
<dbReference type="Gene3D" id="2.40.50.150">
    <property type="match status" value="1"/>
</dbReference>
<dbReference type="Gene3D" id="3.90.1100.10">
    <property type="match status" value="1"/>
</dbReference>
<dbReference type="Gene3D" id="2.30.150.10">
    <property type="entry name" value="DNA-directed RNA polymerase, beta subunit, external 1 domain"/>
    <property type="match status" value="1"/>
</dbReference>
<dbReference type="Gene3D" id="2.40.270.10">
    <property type="entry name" value="DNA-directed RNA polymerase, subunit 2, domain 6"/>
    <property type="match status" value="2"/>
</dbReference>
<dbReference type="Gene3D" id="3.90.1800.10">
    <property type="entry name" value="RNA polymerase alpha subunit dimerisation domain"/>
    <property type="match status" value="1"/>
</dbReference>
<dbReference type="Gene3D" id="3.90.1110.10">
    <property type="entry name" value="RNA polymerase Rpb2, domain 2"/>
    <property type="match status" value="1"/>
</dbReference>
<dbReference type="HAMAP" id="MF_01321">
    <property type="entry name" value="RNApol_bact_RpoB"/>
    <property type="match status" value="1"/>
</dbReference>
<dbReference type="InterPro" id="IPR042107">
    <property type="entry name" value="DNA-dir_RNA_pol_bsu_ext_1_sf"/>
</dbReference>
<dbReference type="InterPro" id="IPR019462">
    <property type="entry name" value="DNA-dir_RNA_pol_bsu_external_1"/>
</dbReference>
<dbReference type="InterPro" id="IPR015712">
    <property type="entry name" value="DNA-dir_RNA_pol_su2"/>
</dbReference>
<dbReference type="InterPro" id="IPR007120">
    <property type="entry name" value="DNA-dir_RNAP_su2_dom"/>
</dbReference>
<dbReference type="InterPro" id="IPR037033">
    <property type="entry name" value="DNA-dir_RNAP_su2_hyb_sf"/>
</dbReference>
<dbReference type="InterPro" id="IPR010243">
    <property type="entry name" value="RNA_pol_bsu_bac"/>
</dbReference>
<dbReference type="InterPro" id="IPR007121">
    <property type="entry name" value="RNA_pol_bsu_CS"/>
</dbReference>
<dbReference type="InterPro" id="IPR007644">
    <property type="entry name" value="RNA_pol_bsu_protrusion"/>
</dbReference>
<dbReference type="InterPro" id="IPR007642">
    <property type="entry name" value="RNA_pol_Rpb2_2"/>
</dbReference>
<dbReference type="InterPro" id="IPR037034">
    <property type="entry name" value="RNA_pol_Rpb2_2_sf"/>
</dbReference>
<dbReference type="InterPro" id="IPR007645">
    <property type="entry name" value="RNA_pol_Rpb2_3"/>
</dbReference>
<dbReference type="InterPro" id="IPR007641">
    <property type="entry name" value="RNA_pol_Rpb2_7"/>
</dbReference>
<dbReference type="InterPro" id="IPR014724">
    <property type="entry name" value="RNA_pol_RPB2_OB-fold"/>
</dbReference>
<dbReference type="NCBIfam" id="NF001616">
    <property type="entry name" value="PRK00405.1"/>
    <property type="match status" value="1"/>
</dbReference>
<dbReference type="NCBIfam" id="TIGR02013">
    <property type="entry name" value="rpoB"/>
    <property type="match status" value="1"/>
</dbReference>
<dbReference type="PANTHER" id="PTHR20856">
    <property type="entry name" value="DNA-DIRECTED RNA POLYMERASE I SUBUNIT 2"/>
    <property type="match status" value="1"/>
</dbReference>
<dbReference type="Pfam" id="PF04563">
    <property type="entry name" value="RNA_pol_Rpb2_1"/>
    <property type="match status" value="1"/>
</dbReference>
<dbReference type="Pfam" id="PF04561">
    <property type="entry name" value="RNA_pol_Rpb2_2"/>
    <property type="match status" value="1"/>
</dbReference>
<dbReference type="Pfam" id="PF04565">
    <property type="entry name" value="RNA_pol_Rpb2_3"/>
    <property type="match status" value="1"/>
</dbReference>
<dbReference type="Pfam" id="PF10385">
    <property type="entry name" value="RNA_pol_Rpb2_45"/>
    <property type="match status" value="1"/>
</dbReference>
<dbReference type="Pfam" id="PF00562">
    <property type="entry name" value="RNA_pol_Rpb2_6"/>
    <property type="match status" value="1"/>
</dbReference>
<dbReference type="Pfam" id="PF04560">
    <property type="entry name" value="RNA_pol_Rpb2_7"/>
    <property type="match status" value="1"/>
</dbReference>
<dbReference type="SUPFAM" id="SSF64484">
    <property type="entry name" value="beta and beta-prime subunits of DNA dependent RNA-polymerase"/>
    <property type="match status" value="1"/>
</dbReference>
<dbReference type="PROSITE" id="PS01166">
    <property type="entry name" value="RNA_POL_BETA"/>
    <property type="match status" value="1"/>
</dbReference>
<name>RPOB_CHLPN</name>
<proteinExistence type="inferred from homology"/>